<reference key="1">
    <citation type="journal article" date="1998" name="Nature">
        <title>Deciphering the biology of Mycobacterium tuberculosis from the complete genome sequence.</title>
        <authorList>
            <person name="Cole S.T."/>
            <person name="Brosch R."/>
            <person name="Parkhill J."/>
            <person name="Garnier T."/>
            <person name="Churcher C.M."/>
            <person name="Harris D.E."/>
            <person name="Gordon S.V."/>
            <person name="Eiglmeier K."/>
            <person name="Gas S."/>
            <person name="Barry C.E. III"/>
            <person name="Tekaia F."/>
            <person name="Badcock K."/>
            <person name="Basham D."/>
            <person name="Brown D."/>
            <person name="Chillingworth T."/>
            <person name="Connor R."/>
            <person name="Davies R.M."/>
            <person name="Devlin K."/>
            <person name="Feltwell T."/>
            <person name="Gentles S."/>
            <person name="Hamlin N."/>
            <person name="Holroyd S."/>
            <person name="Hornsby T."/>
            <person name="Jagels K."/>
            <person name="Krogh A."/>
            <person name="McLean J."/>
            <person name="Moule S."/>
            <person name="Murphy L.D."/>
            <person name="Oliver S."/>
            <person name="Osborne J."/>
            <person name="Quail M.A."/>
            <person name="Rajandream M.A."/>
            <person name="Rogers J."/>
            <person name="Rutter S."/>
            <person name="Seeger K."/>
            <person name="Skelton S."/>
            <person name="Squares S."/>
            <person name="Squares R."/>
            <person name="Sulston J.E."/>
            <person name="Taylor K."/>
            <person name="Whitehead S."/>
            <person name="Barrell B.G."/>
        </authorList>
    </citation>
    <scope>NUCLEOTIDE SEQUENCE [LARGE SCALE GENOMIC DNA]</scope>
    <source>
        <strain>ATCC 25618 / H37Rv</strain>
    </source>
</reference>
<reference key="2">
    <citation type="journal article" date="2002" name="Infect. Immun.">
        <title>IdeR, an essential gene in Mycobacterium tuberculosis: role of IdeR in iron-dependent gene expression, iron metabolism, and oxidative stress response.</title>
        <authorList>
            <person name="Rodriguez G.M."/>
            <person name="Voskuil M.I."/>
            <person name="Gold B."/>
            <person name="Schoolnik G.K."/>
            <person name="Smith I."/>
        </authorList>
    </citation>
    <scope>INDUCTION</scope>
</reference>
<reference key="3">
    <citation type="journal article" date="2007" name="J. Bacteriol.">
        <title>Global analysis of the Mycobacterium tuberculosis Zur (FurB) regulon.</title>
        <authorList>
            <person name="Maciag A."/>
            <person name="Dainese E."/>
            <person name="Rodriguez G.M."/>
            <person name="Milano A."/>
            <person name="Provvedi R."/>
            <person name="Pasca M.R."/>
            <person name="Smith I."/>
            <person name="Palu G."/>
            <person name="Riccardi G."/>
            <person name="Manganelli R."/>
        </authorList>
    </citation>
    <scope>INDUCTION</scope>
</reference>
<reference key="4">
    <citation type="journal article" date="2009" name="J. Bacteriol.">
        <title>Characterization of a Mycobacterium tuberculosis ESX-3 conditional mutant: essentiality and rescue by iron and zinc.</title>
        <authorList>
            <person name="Serafini A."/>
            <person name="Boldrin F."/>
            <person name="Palu G."/>
            <person name="Manganelli R."/>
        </authorList>
    </citation>
    <scope>FUNCTION</scope>
    <source>
        <strain>H37Rv</strain>
    </source>
</reference>
<reference key="5">
    <citation type="journal article" date="2009" name="PLoS Pathog.">
        <title>Systematic genetic nomenclature for type VII secretion systems.</title>
        <authorList>
            <person name="Bitter W."/>
            <person name="Houben E.N."/>
            <person name="Bottai D."/>
            <person name="Brodin P."/>
            <person name="Brown E.J."/>
            <person name="Cox J.S."/>
            <person name="Derbyshire K."/>
            <person name="Fortune S.M."/>
            <person name="Gao L.Y."/>
            <person name="Liu J."/>
            <person name="Gey van Pittius N.C."/>
            <person name="Pym A.S."/>
            <person name="Rubin E.J."/>
            <person name="Sherman D.R."/>
            <person name="Cole S.T."/>
            <person name="Brosch R."/>
        </authorList>
    </citation>
    <scope>NOMENCLATURE</scope>
</reference>
<reference key="6">
    <citation type="journal article" date="2011" name="Mol. Cell. Proteomics">
        <title>Proteogenomic analysis of Mycobacterium tuberculosis by high resolution mass spectrometry.</title>
        <authorList>
            <person name="Kelkar D.S."/>
            <person name="Kumar D."/>
            <person name="Kumar P."/>
            <person name="Balakrishnan L."/>
            <person name="Muthusamy B."/>
            <person name="Yadav A.K."/>
            <person name="Shrivastava P."/>
            <person name="Marimuthu A."/>
            <person name="Anand S."/>
            <person name="Sundaram H."/>
            <person name="Kingsbury R."/>
            <person name="Harsha H.C."/>
            <person name="Nair B."/>
            <person name="Prasad T.S."/>
            <person name="Chauhan D.S."/>
            <person name="Katoch K."/>
            <person name="Katoch V.M."/>
            <person name="Kumar P."/>
            <person name="Chaerkady R."/>
            <person name="Ramachandran S."/>
            <person name="Dash D."/>
            <person name="Pandey A."/>
        </authorList>
    </citation>
    <scope>IDENTIFICATION BY MASS SPECTROMETRY [LARGE SCALE ANALYSIS]</scope>
    <source>
        <strain>ATCC 25618 / H37Rv</strain>
    </source>
</reference>
<reference key="7">
    <citation type="journal article" date="2013" name="PLoS ONE">
        <title>The ESX-3 secretion system is necessary for iron and zinc homeostasis in Mycobacterium tuberculosis.</title>
        <authorList>
            <person name="Serafini A."/>
            <person name="Pisu D."/>
            <person name="Palu G."/>
            <person name="Rodriguez G.M."/>
            <person name="Manganelli R."/>
        </authorList>
    </citation>
    <scope>FUNCTION</scope>
</reference>
<feature type="chain" id="PRO_0000393871" description="ESX-3 secretion system protein EccE3">
    <location>
        <begin position="1"/>
        <end position="331"/>
    </location>
</feature>
<feature type="transmembrane region" description="Helical" evidence="2">
    <location>
        <begin position="11"/>
        <end position="31"/>
    </location>
</feature>
<feature type="transmembrane region" description="Helical" evidence="2">
    <location>
        <begin position="37"/>
        <end position="57"/>
    </location>
</feature>
<gene>
    <name evidence="7" type="primary">eccE3</name>
    <name type="ordered locus">Rv0292</name>
</gene>
<protein>
    <recommendedName>
        <fullName evidence="8">ESX-3 secretion system protein EccE3</fullName>
    </recommendedName>
    <alternativeName>
        <fullName evidence="8">ESX conserved component E3</fullName>
    </alternativeName>
    <alternativeName>
        <fullName evidence="8">Type VII secretion system protein EccE3</fullName>
        <shortName evidence="8">T7SS protein EccE3</shortName>
    </alternativeName>
</protein>
<organism>
    <name type="scientific">Mycobacterium tuberculosis (strain ATCC 25618 / H37Rv)</name>
    <dbReference type="NCBI Taxonomy" id="83332"/>
    <lineage>
        <taxon>Bacteria</taxon>
        <taxon>Bacillati</taxon>
        <taxon>Actinomycetota</taxon>
        <taxon>Actinomycetes</taxon>
        <taxon>Mycobacteriales</taxon>
        <taxon>Mycobacteriaceae</taxon>
        <taxon>Mycobacterium</taxon>
        <taxon>Mycobacterium tuberculosis complex</taxon>
    </lineage>
</organism>
<keyword id="KW-0997">Cell inner membrane</keyword>
<keyword id="KW-1003">Cell membrane</keyword>
<keyword id="KW-0472">Membrane</keyword>
<keyword id="KW-1185">Reference proteome</keyword>
<keyword id="KW-0812">Transmembrane</keyword>
<keyword id="KW-1133">Transmembrane helix</keyword>
<keyword id="KW-0813">Transport</keyword>
<dbReference type="EMBL" id="AL123456">
    <property type="protein sequence ID" value="CCP43022.1"/>
    <property type="molecule type" value="Genomic_DNA"/>
</dbReference>
<dbReference type="PIR" id="B70837">
    <property type="entry name" value="B70837"/>
</dbReference>
<dbReference type="RefSeq" id="NP_214806.1">
    <property type="nucleotide sequence ID" value="NC_000962.3"/>
</dbReference>
<dbReference type="RefSeq" id="WP_003916638.1">
    <property type="nucleotide sequence ID" value="NZ_NVQJ01000026.1"/>
</dbReference>
<dbReference type="SMR" id="P9WJE5"/>
<dbReference type="STRING" id="83332.Rv0292"/>
<dbReference type="PaxDb" id="83332-Rv0292"/>
<dbReference type="DNASU" id="886601"/>
<dbReference type="GeneID" id="886601"/>
<dbReference type="KEGG" id="mtu:Rv0292"/>
<dbReference type="KEGG" id="mtv:RVBD_0292"/>
<dbReference type="TubercuList" id="Rv0292"/>
<dbReference type="eggNOG" id="ENOG5031E1N">
    <property type="taxonomic scope" value="Bacteria"/>
</dbReference>
<dbReference type="InParanoid" id="P9WJE5"/>
<dbReference type="OrthoDB" id="4760969at2"/>
<dbReference type="Proteomes" id="UP000001584">
    <property type="component" value="Chromosome"/>
</dbReference>
<dbReference type="GO" id="GO:0009274">
    <property type="term" value="C:peptidoglycan-based cell wall"/>
    <property type="evidence" value="ECO:0007005"/>
    <property type="project" value="MTBBASE"/>
</dbReference>
<dbReference type="GO" id="GO:0005886">
    <property type="term" value="C:plasma membrane"/>
    <property type="evidence" value="ECO:0007005"/>
    <property type="project" value="MTBBASE"/>
</dbReference>
<dbReference type="InterPro" id="IPR050051">
    <property type="entry name" value="EccE_dom"/>
</dbReference>
<dbReference type="InterPro" id="IPR021368">
    <property type="entry name" value="T7SS_EccE"/>
</dbReference>
<dbReference type="NCBIfam" id="TIGR03923">
    <property type="entry name" value="T7SS_EccE"/>
    <property type="match status" value="1"/>
</dbReference>
<dbReference type="Pfam" id="PF11203">
    <property type="entry name" value="EccE"/>
    <property type="match status" value="1"/>
</dbReference>
<proteinExistence type="evidence at protein level"/>
<evidence type="ECO:0000250" key="1">
    <source>
        <dbReference type="UniProtKB" id="B2HSU8"/>
    </source>
</evidence>
<evidence type="ECO:0000255" key="2"/>
<evidence type="ECO:0000269" key="3">
    <source>
    </source>
</evidence>
<evidence type="ECO:0000269" key="4">
    <source>
    </source>
</evidence>
<evidence type="ECO:0000269" key="5">
    <source>
    </source>
</evidence>
<evidence type="ECO:0000269" key="6">
    <source>
    </source>
</evidence>
<evidence type="ECO:0000303" key="7">
    <source>
    </source>
</evidence>
<evidence type="ECO:0000305" key="8"/>
<accession>P9WJE5</accession>
<accession>L0T688</accession>
<accession>O53696</accession>
<accession>Q7DA30</accession>
<comment type="function">
    <text evidence="5 6">Part of the ESX-3 specialized secretion system, which is important for iron and zinc uptake or homeostasis.</text>
</comment>
<comment type="subunit">
    <text evidence="1">Part of the ESX-3 / type VII secretion system (T7SS), which is composed of cytosolic and membrane components. The ESX-3 membrane complex is composed of EccB3, EccC3, EccD3 and EccE3.</text>
</comment>
<comment type="subcellular location">
    <subcellularLocation>
        <location evidence="1">Cell inner membrane</location>
        <topology evidence="2">Multi-pass membrane protein</topology>
    </subcellularLocation>
</comment>
<comment type="induction">
    <text evidence="3 4">Repressed by IdeR in the presence of iron and by Zur in the presence of zinc.</text>
</comment>
<comment type="similarity">
    <text evidence="8">Belongs to the EccE family.</text>
</comment>
<name>ECCE3_MYCTU</name>
<sequence>MNPIPSWPGRGRVTLVLLAVVPVALAYPWQSTRDYVLLGVAAAVVIGLFGFWRGLYFTTIARRGLAILRRRRRIAEPATCTRTTVLVWVGPPASDTNVLPLTLIARYLDRYGIRADTIRITSRVTASGDCRTWVGLTVVADDNLAALQARSARIPLQETAQVAARRLADHLREIGWEAGTAAPDEIPALVAADSRETWRGMRHTDSDYVAAYRVSANAELPDTLPAIRSRPAQETWIALEIAYAAGSSTRYTVAAACALRTDWRPGGTAPVAGLLPQHGNHVPALTALDPRSTRRLDGHTDAPADLLTRLHWPTPTAGAHRAPLTNAVSRT</sequence>